<feature type="chain" id="PRO_0000190086" description="Cyclin-dependent kinase inhibitor 1B">
    <location>
        <begin position="1"/>
        <end position="178" status="greater than"/>
    </location>
</feature>
<feature type="region of interest" description="Disordered" evidence="5">
    <location>
        <begin position="1"/>
        <end position="31"/>
    </location>
</feature>
<feature type="region of interest" description="Interaction with CDK2" evidence="3">
    <location>
        <begin position="51"/>
        <end position="91"/>
    </location>
</feature>
<feature type="region of interest" description="Disordered" evidence="5">
    <location>
        <begin position="87"/>
        <end position="178"/>
    </location>
</feature>
<feature type="short sequence motif" description="Nuclear localization signal" evidence="4">
    <location>
        <begin position="153"/>
        <end position="169"/>
    </location>
</feature>
<feature type="compositionally biased region" description="Polar residues" evidence="5">
    <location>
        <begin position="1"/>
        <end position="11"/>
    </location>
</feature>
<feature type="compositionally biased region" description="Polar residues" evidence="5">
    <location>
        <begin position="104"/>
        <end position="113"/>
    </location>
</feature>
<feature type="compositionally biased region" description="Basic and acidic residues" evidence="5">
    <location>
        <begin position="126"/>
        <end position="137"/>
    </location>
</feature>
<feature type="modified residue" description="Phosphoserine; by UHMK1" evidence="3">
    <location>
        <position position="10"/>
    </location>
</feature>
<feature type="modified residue" description="Phosphotyrosine; by SRC" evidence="3">
    <location>
        <position position="74"/>
    </location>
</feature>
<feature type="modified residue" description="Phosphotyrosine; by ABL, LYN, SRC and JAK2" evidence="3">
    <location>
        <position position="88"/>
    </location>
</feature>
<feature type="modified residue" description="Phosphotyrosine" evidence="3">
    <location>
        <position position="89"/>
    </location>
</feature>
<feature type="modified residue" description="Phosphothreonine; by CaMK1, PKB/AKT1, RPS6KA1, RPS6KA3 and PIM1" evidence="3">
    <location>
        <position position="157"/>
    </location>
</feature>
<feature type="modified residue" description="Phosphothreonine" evidence="2">
    <location>
        <position position="170"/>
    </location>
</feature>
<feature type="non-terminal residue">
    <location>
        <position position="178"/>
    </location>
</feature>
<dbReference type="EMBL" id="U09966">
    <property type="protein sequence ID" value="AAA20234.1"/>
    <property type="molecule type" value="mRNA"/>
</dbReference>
<dbReference type="SMR" id="P46529"/>
<dbReference type="CORUM" id="P46529"/>
<dbReference type="Proteomes" id="UP000694425">
    <property type="component" value="Unplaced"/>
</dbReference>
<dbReference type="GO" id="GO:0005768">
    <property type="term" value="C:endosome"/>
    <property type="evidence" value="ECO:0007669"/>
    <property type="project" value="UniProtKB-SubCell"/>
</dbReference>
<dbReference type="GO" id="GO:0005634">
    <property type="term" value="C:nucleus"/>
    <property type="evidence" value="ECO:0007669"/>
    <property type="project" value="UniProtKB-SubCell"/>
</dbReference>
<dbReference type="GO" id="GO:0004861">
    <property type="term" value="F:cyclin-dependent protein serine/threonine kinase inhibitor activity"/>
    <property type="evidence" value="ECO:0000250"/>
    <property type="project" value="UniProtKB"/>
</dbReference>
<dbReference type="GO" id="GO:0051087">
    <property type="term" value="F:protein-folding chaperone binding"/>
    <property type="evidence" value="ECO:0007669"/>
    <property type="project" value="TreeGrafter"/>
</dbReference>
<dbReference type="GO" id="GO:0000082">
    <property type="term" value="P:G1/S transition of mitotic cell cycle"/>
    <property type="evidence" value="ECO:0007669"/>
    <property type="project" value="TreeGrafter"/>
</dbReference>
<dbReference type="GO" id="GO:0008285">
    <property type="term" value="P:negative regulation of cell population proliferation"/>
    <property type="evidence" value="ECO:0007669"/>
    <property type="project" value="TreeGrafter"/>
</dbReference>
<dbReference type="GO" id="GO:0045736">
    <property type="term" value="P:negative regulation of cyclin-dependent protein serine/threonine kinase activity"/>
    <property type="evidence" value="ECO:0000250"/>
    <property type="project" value="UniProtKB"/>
</dbReference>
<dbReference type="GO" id="GO:0045930">
    <property type="term" value="P:negative regulation of mitotic cell cycle"/>
    <property type="evidence" value="ECO:0007669"/>
    <property type="project" value="TreeGrafter"/>
</dbReference>
<dbReference type="FunFam" id="4.10.365.10:FF:000001">
    <property type="entry name" value="Cyclin-dependent kinase inhibitor 1B"/>
    <property type="match status" value="1"/>
</dbReference>
<dbReference type="Gene3D" id="4.10.365.10">
    <property type="entry name" value="p27"/>
    <property type="match status" value="1"/>
</dbReference>
<dbReference type="InterPro" id="IPR003175">
    <property type="entry name" value="CDI_dom"/>
</dbReference>
<dbReference type="InterPro" id="IPR044898">
    <property type="entry name" value="CDI_dom_sf"/>
</dbReference>
<dbReference type="PANTHER" id="PTHR10265">
    <property type="entry name" value="CYCLIN-DEPENDENT KINASE INHIBITOR 1"/>
    <property type="match status" value="1"/>
</dbReference>
<dbReference type="PANTHER" id="PTHR10265:SF9">
    <property type="entry name" value="CYCLIN-DEPENDENT KINASE INHIBITOR 1B"/>
    <property type="match status" value="1"/>
</dbReference>
<dbReference type="Pfam" id="PF02234">
    <property type="entry name" value="CDI"/>
    <property type="match status" value="1"/>
</dbReference>
<sequence>MSNVRVSNGSPSLERMDARQAEYPKPSACRNLFGPVNHEELTRDLEKHRRDMEEASQRKWNFDFQNHKPLEGKYEWQEVEKGSLPEFYYRPPRPPKGACKVPAQESQDVSGTRQAVPLMGSQANSEDTHLVDQKTDTADNQAGLAEQCTGIRKRPATDDSSPQNKRANRTEENVSDGS</sequence>
<accession>P46529</accession>
<reference key="1">
    <citation type="journal article" date="1994" name="Cell">
        <title>Cloning of p27Kip1, a cyclin-dependent kinase inhibitor and a potential mediator of extracellular antimitogenic signals.</title>
        <authorList>
            <person name="Polyak K."/>
            <person name="Lee M.-H."/>
            <person name="Erdjument-Bromage H."/>
            <person name="Koff A."/>
            <person name="Roberts J.M."/>
            <person name="Tempst P."/>
            <person name="Massague J."/>
        </authorList>
    </citation>
    <scope>NUCLEOTIDE SEQUENCE [MRNA]</scope>
    <source>
        <tissue>Lung</tissue>
    </source>
</reference>
<reference key="2">
    <citation type="journal article" date="1994" name="Genes Dev.">
        <title>p27Kip1, a cyclin-Cdk inhibitor, links transforming growth factor-beta and contact inhibition to cell cycle arrest.</title>
        <authorList>
            <person name="Polyak K."/>
            <person name="Kato J.-Y."/>
            <person name="Solomon M.J."/>
            <person name="Sherr C.J."/>
            <person name="Massague J."/>
            <person name="Roberts J.M."/>
            <person name="Koff A."/>
        </authorList>
    </citation>
    <scope>FUNCTION</scope>
</reference>
<gene>
    <name type="primary">CDKN1B</name>
</gene>
<keyword id="KW-0131">Cell cycle</keyword>
<keyword id="KW-0963">Cytoplasm</keyword>
<keyword id="KW-0967">Endosome</keyword>
<keyword id="KW-0539">Nucleus</keyword>
<keyword id="KW-0597">Phosphoprotein</keyword>
<keyword id="KW-0649">Protein kinase inhibitor</keyword>
<keyword id="KW-1185">Reference proteome</keyword>
<keyword id="KW-0832">Ubl conjugation</keyword>
<name>CDN1B_NEOVI</name>
<evidence type="ECO:0000250" key="1"/>
<evidence type="ECO:0000250" key="2">
    <source>
        <dbReference type="UniProtKB" id="P46414"/>
    </source>
</evidence>
<evidence type="ECO:0000250" key="3">
    <source>
        <dbReference type="UniProtKB" id="P46527"/>
    </source>
</evidence>
<evidence type="ECO:0000255" key="4"/>
<evidence type="ECO:0000256" key="5">
    <source>
        <dbReference type="SAM" id="MobiDB-lite"/>
    </source>
</evidence>
<evidence type="ECO:0000269" key="6">
    <source>
    </source>
</evidence>
<evidence type="ECO:0000305" key="7"/>
<comment type="function">
    <text evidence="3 6">Important regulator of cell cycle progression (PubMed:8288131). Inhibits the kinase activity of CDK2 bound to cyclin A, but has little inhibitory activity on CDK2 bound to SPDYA (By similarity). Involved in G1 arrest (PubMed:8288131). Potent inhibitor of cyclin E- and cyclin A-CDK2 complexes. Forms a complex with cyclin type D-CDK4 complexes and is involved in the assembly, stability, and modulation of CCND1-CDK4 complex activation. Acts either as an inhibitor or an activator of cyclin type D-CDK4 complexes depending on its phosphorylation state and/or stoichometry (By similarity).</text>
</comment>
<comment type="subunit">
    <text evidence="1 3">Forms a ternary complex composed of CCNE1, CDK2 and CDKN1B. Interacts directly with CCNE1; the interaction is inhibited by CDK2-dependent phosphorylation. Interacts with COPS5, subunit of the COP9 signalosome complex; the interaction leads to CDKN1B degradation. Interacts with NUP50; the interaction leads to nuclear import and degradation of phosphorylated CDKN1B. Interacts with CCND1 and SNX6 (By similarity). Interacts (Thr-198-phosphorylated form) with 14-3-3 proteins, binds strongly YWHAQ, weakly YWHAE and YWHAH, but not YWHAB nor YWHAZ; the interaction with YWHAQ results in translocation to the cytoplasm. Interacts with AKT1 and LYN; the interactions lead to cytoplasmic mislocation, phosphorylation of CDKN1B and inhibition of cell cycle arrest. Forms a ternary complex with CCNA2 and CDK2; CDKN1B inhibits the kinase activity of CDK2 through conformational rearrangements. Interacts (unphosphorylated form) with CDK2. Forms a complex with CDK2 and SPDYA, but does not directly interact with SPDYA. Forms a ternary complex composed of cyclin D, CDK4 and CDKN1B. Interacts (phosphorylated on Tyr-88 and Tyr-89) with CDK4; the interaction is required for cyclin D and CDK4 complex assembly, induces nuclear translocation and activates the CDK4 kinase activity. Interacts with GRB2. Interacts with PIM1. Identified in a complex with SKP1, SKP2 and CKS1B. Interacts with UHMK1; the interaction leads to cytoplasmic mislocation, phosphorylation of CDKN1B and inhibition of cell cycle arrest. Also interacts with CDK1. Dephosphorylated by PPM1H, leading to CDKN1B stability (By similarity).</text>
</comment>
<comment type="subcellular location">
    <subcellularLocation>
        <location evidence="1">Nucleus</location>
    </subcellularLocation>
    <subcellularLocation>
        <location evidence="1">Cytoplasm</location>
    </subcellularLocation>
    <subcellularLocation>
        <location evidence="1">Endosome</location>
    </subcellularLocation>
    <text evidence="1">Nuclear and cytoplasmic in quiescent cells. Mitogen-activated UHMK1 phosphorylation on Ser-10 results in translocation to the cytoplasm and cell cycle progression. Phosphorylation on Ser-10 facilitates nuclear export (By similarity). Colocalizes at the endosome with SNX6; this leads to lysosomal degradation (By similarity).</text>
</comment>
<comment type="PTM">
    <text evidence="1">Phosphorylated; phosphorylation occurs on serine, threonine and tyrosine residues. Phosphorylation on Ser-10 is the major site of phosphorylation in resting cells, takes place at the G(0)-G(1) phase and leads to protein stability. Phosphorylation on other sites is greatly enhanced by mitogens, growth factors, MYC and in certain cancer cell lines. The phosphorylated form found in the cytoplasm is inactivate. Phosphorylation on Tyr-88 has no effect on binding CDK complexes (By similarity).</text>
</comment>
<comment type="PTM">
    <text evidence="1">Ubiquitinated; in the cytoplasm by the KPC complex (composed of RNF123/KPC1 and UBAC1/KPC2) and, in the nucleus, by SCF(SKP2). The latter requires prior phosphorylation on Thr-187. Ubiquitinated; by a TRIM21-containing SCF(SKP2)-like complex; leads to its degradation (By similarity).</text>
</comment>
<comment type="PTM">
    <text evidence="1">Subject to degradation in the lysosome. Interaction with SNX6 promotes lysosomal degradation (By similarity).</text>
</comment>
<comment type="similarity">
    <text evidence="7">Belongs to the CDI family.</text>
</comment>
<organism>
    <name type="scientific">Neovison vison</name>
    <name type="common">American mink</name>
    <name type="synonym">Mustela vison</name>
    <dbReference type="NCBI Taxonomy" id="452646"/>
    <lineage>
        <taxon>Eukaryota</taxon>
        <taxon>Metazoa</taxon>
        <taxon>Chordata</taxon>
        <taxon>Craniata</taxon>
        <taxon>Vertebrata</taxon>
        <taxon>Euteleostomi</taxon>
        <taxon>Mammalia</taxon>
        <taxon>Eutheria</taxon>
        <taxon>Laurasiatheria</taxon>
        <taxon>Carnivora</taxon>
        <taxon>Caniformia</taxon>
        <taxon>Musteloidea</taxon>
        <taxon>Mustelidae</taxon>
        <taxon>Mustelinae</taxon>
        <taxon>Neogale</taxon>
    </lineage>
</organism>
<protein>
    <recommendedName>
        <fullName>Cyclin-dependent kinase inhibitor 1B</fullName>
    </recommendedName>
    <alternativeName>
        <fullName>Cyclin-dependent kinase inhibitor p27</fullName>
    </alternativeName>
    <alternativeName>
        <fullName>p27Kip1</fullName>
    </alternativeName>
</protein>
<proteinExistence type="evidence at transcript level"/>